<sequence>MMLIGEALIGEAPELAHVDLMIGDKEGPVGQAFATGMTQLSAGHTPVLSVIRPNLPTKPSTLIVPKVTVKGMDQASQIFGPAQAAVSKAVADAVEEGLIPKEKAEDLVIIASVFIHPQAVDYNRIYRYNYGATKLALKRALDGFPDIDTVLHEKDRAAHAVMGFKISKLWDAPYLQVALDNPNLPVILNIIKQLPKSDHLILEAGTPLIKRYGVDVISKIREVRPDAFIVADLKTLDTGNLEARMVADATADAIVVSALAPIATLNKVIEEAHKTGIYAVMDTLNTPDPVAVLEQLDVLPDVVELHRAIDIEGTAHAWGSIEGIKALAVKRSSKVLVAVAGGVRVDTISDALGAGADILVVGRAITNSKDVRQAADRFIEGLNKPEIDQFRIMTDF</sequence>
<organism>
    <name type="scientific">Methanococcoides burtonii (strain DSM 6242 / NBRC 107633 / OCM 468 / ACE-M)</name>
    <dbReference type="NCBI Taxonomy" id="259564"/>
    <lineage>
        <taxon>Archaea</taxon>
        <taxon>Methanobacteriati</taxon>
        <taxon>Methanobacteriota</taxon>
        <taxon>Stenosarchaea group</taxon>
        <taxon>Methanomicrobia</taxon>
        <taxon>Methanosarcinales</taxon>
        <taxon>Methanosarcinaceae</taxon>
        <taxon>Methanococcoides</taxon>
    </lineage>
</organism>
<reference key="1">
    <citation type="journal article" date="2009" name="ISME J.">
        <title>The genome sequence of the psychrophilic archaeon, Methanococcoides burtonii: the role of genome evolution in cold adaptation.</title>
        <authorList>
            <person name="Allen M.A."/>
            <person name="Lauro F.M."/>
            <person name="Williams T.J."/>
            <person name="Burg D."/>
            <person name="Siddiqui K.S."/>
            <person name="De Francisci D."/>
            <person name="Chong K.W."/>
            <person name="Pilak O."/>
            <person name="Chew H.H."/>
            <person name="De Maere M.Z."/>
            <person name="Ting L."/>
            <person name="Katrib M."/>
            <person name="Ng C."/>
            <person name="Sowers K.R."/>
            <person name="Galperin M.Y."/>
            <person name="Anderson I.J."/>
            <person name="Ivanova N."/>
            <person name="Dalin E."/>
            <person name="Martinez M."/>
            <person name="Lapidus A."/>
            <person name="Hauser L."/>
            <person name="Land M."/>
            <person name="Thomas T."/>
            <person name="Cavicchioli R."/>
        </authorList>
    </citation>
    <scope>NUCLEOTIDE SEQUENCE [LARGE SCALE GENOMIC DNA]</scope>
    <source>
        <strain>DSM 6242 / NBRC 107633 / OCM 468 / ACE-M</strain>
    </source>
</reference>
<accession>Q12UK3</accession>
<proteinExistence type="inferred from homology"/>
<name>FAEHP_METBU</name>
<evidence type="ECO:0000255" key="1">
    <source>
        <dbReference type="HAMAP-Rule" id="MF_01268"/>
    </source>
</evidence>
<dbReference type="EC" id="4.2.1.147" evidence="1"/>
<dbReference type="EC" id="4.1.2.43" evidence="1"/>
<dbReference type="EMBL" id="CP000300">
    <property type="protein sequence ID" value="ABE52873.1"/>
    <property type="molecule type" value="Genomic_DNA"/>
</dbReference>
<dbReference type="RefSeq" id="WP_011500014.1">
    <property type="nucleotide sequence ID" value="NC_007955.1"/>
</dbReference>
<dbReference type="SMR" id="Q12UK3"/>
<dbReference type="STRING" id="259564.Mbur_1994"/>
<dbReference type="GeneID" id="3996946"/>
<dbReference type="KEGG" id="mbu:Mbur_1994"/>
<dbReference type="HOGENOM" id="CLU_701335_0_0_2"/>
<dbReference type="OrthoDB" id="64276at2157"/>
<dbReference type="UniPathway" id="UPA00293"/>
<dbReference type="Proteomes" id="UP000001979">
    <property type="component" value="Chromosome"/>
</dbReference>
<dbReference type="GO" id="GO:0033982">
    <property type="term" value="F:3-dehydro-L-gulonate-6-phosphate decarboxylase activity"/>
    <property type="evidence" value="ECO:0007669"/>
    <property type="project" value="TreeGrafter"/>
</dbReference>
<dbReference type="GO" id="GO:0016840">
    <property type="term" value="F:carbon-nitrogen lyase activity"/>
    <property type="evidence" value="ECO:0007669"/>
    <property type="project" value="InterPro"/>
</dbReference>
<dbReference type="GO" id="GO:0043801">
    <property type="term" value="F:hexulose-6-phosphate synthase activity"/>
    <property type="evidence" value="ECO:0007669"/>
    <property type="project" value="UniProtKB-UniRule"/>
</dbReference>
<dbReference type="GO" id="GO:0016836">
    <property type="term" value="F:hydro-lyase activity"/>
    <property type="evidence" value="ECO:0007669"/>
    <property type="project" value="UniProtKB-UniRule"/>
</dbReference>
<dbReference type="GO" id="GO:0004590">
    <property type="term" value="F:orotidine-5'-phosphate decarboxylase activity"/>
    <property type="evidence" value="ECO:0007669"/>
    <property type="project" value="InterPro"/>
</dbReference>
<dbReference type="GO" id="GO:0006207">
    <property type="term" value="P:'de novo' pyrimidine nucleobase biosynthetic process"/>
    <property type="evidence" value="ECO:0007669"/>
    <property type="project" value="InterPro"/>
</dbReference>
<dbReference type="GO" id="GO:0016051">
    <property type="term" value="P:carbohydrate biosynthetic process"/>
    <property type="evidence" value="ECO:0007669"/>
    <property type="project" value="UniProtKB-UniRule"/>
</dbReference>
<dbReference type="GO" id="GO:0019854">
    <property type="term" value="P:L-ascorbic acid catabolic process"/>
    <property type="evidence" value="ECO:0007669"/>
    <property type="project" value="TreeGrafter"/>
</dbReference>
<dbReference type="CDD" id="cd04726">
    <property type="entry name" value="KGPDC_HPS"/>
    <property type="match status" value="1"/>
</dbReference>
<dbReference type="FunFam" id="3.20.20.70:FF:000022">
    <property type="entry name" value="3-keto-L-gulonate-6-phosphate decarboxylase UlaD"/>
    <property type="match status" value="1"/>
</dbReference>
<dbReference type="FunFam" id="3.30.230.60:FF:000001">
    <property type="entry name" value="5,6,7,8-tetrahydromethanopterin hydro-lyase"/>
    <property type="match status" value="1"/>
</dbReference>
<dbReference type="Gene3D" id="3.20.20.70">
    <property type="entry name" value="Aldolase class I"/>
    <property type="match status" value="1"/>
</dbReference>
<dbReference type="Gene3D" id="3.30.230.60">
    <property type="entry name" value="Formaldehyde-activating enzyme"/>
    <property type="match status" value="1"/>
</dbReference>
<dbReference type="HAMAP" id="MF_01268">
    <property type="entry name" value="Fae_Hps"/>
    <property type="match status" value="1"/>
</dbReference>
<dbReference type="InterPro" id="IPR013785">
    <property type="entry name" value="Aldolase_TIM"/>
</dbReference>
<dbReference type="InterPro" id="IPR020868">
    <property type="entry name" value="Fae/Hps"/>
</dbReference>
<dbReference type="InterPro" id="IPR014826">
    <property type="entry name" value="HCHO-activating_enzyme"/>
</dbReference>
<dbReference type="InterPro" id="IPR037075">
    <property type="entry name" value="HCHO-activating_enzyme_sf"/>
</dbReference>
<dbReference type="InterPro" id="IPR041710">
    <property type="entry name" value="HPS/KGPDC"/>
</dbReference>
<dbReference type="InterPro" id="IPR001754">
    <property type="entry name" value="OMPdeCOase_dom"/>
</dbReference>
<dbReference type="InterPro" id="IPR020568">
    <property type="entry name" value="Ribosomal_Su5_D2-typ_SF"/>
</dbReference>
<dbReference type="InterPro" id="IPR011060">
    <property type="entry name" value="RibuloseP-bd_barrel"/>
</dbReference>
<dbReference type="NCBIfam" id="TIGR03126">
    <property type="entry name" value="one_C_fae"/>
    <property type="match status" value="1"/>
</dbReference>
<dbReference type="NCBIfam" id="NF009833">
    <property type="entry name" value="PRK13307.1"/>
    <property type="match status" value="1"/>
</dbReference>
<dbReference type="PANTHER" id="PTHR35039">
    <property type="entry name" value="3-KETO-L-GULONATE-6-PHOSPHATE DECARBOXYLASE SGBH-RELATED"/>
    <property type="match status" value="1"/>
</dbReference>
<dbReference type="PANTHER" id="PTHR35039:SF3">
    <property type="entry name" value="3-KETO-L-GULONATE-6-PHOSPHATE DECARBOXYLASE SGBH-RELATED"/>
    <property type="match status" value="1"/>
</dbReference>
<dbReference type="Pfam" id="PF08714">
    <property type="entry name" value="Fae"/>
    <property type="match status" value="1"/>
</dbReference>
<dbReference type="Pfam" id="PF00215">
    <property type="entry name" value="OMPdecase"/>
    <property type="match status" value="1"/>
</dbReference>
<dbReference type="SMART" id="SM00934">
    <property type="entry name" value="OMPdecase"/>
    <property type="match status" value="1"/>
</dbReference>
<dbReference type="SUPFAM" id="SSF54211">
    <property type="entry name" value="Ribosomal protein S5 domain 2-like"/>
    <property type="match status" value="1"/>
</dbReference>
<dbReference type="SUPFAM" id="SSF51366">
    <property type="entry name" value="Ribulose-phoshate binding barrel"/>
    <property type="match status" value="1"/>
</dbReference>
<gene>
    <name evidence="1" type="primary">fae-hps</name>
    <name type="ordered locus">Mbur_1994</name>
</gene>
<feature type="chain" id="PRO_1000067323" description="Bifunctional enzyme Fae/Hps">
    <location>
        <begin position="1"/>
        <end position="396"/>
    </location>
</feature>
<feature type="region of interest" description="Formaldehyde-activating enzyme" evidence="1">
    <location>
        <begin position="1"/>
        <end position="161"/>
    </location>
</feature>
<feature type="region of interest" description="3-hexulose-6-phosphate synthase" evidence="1">
    <location>
        <begin position="162"/>
        <end position="396"/>
    </location>
</feature>
<feature type="active site" description="Proton donor" evidence="1">
    <location>
        <position position="17"/>
    </location>
</feature>
<feature type="binding site" evidence="1">
    <location>
        <position position="19"/>
    </location>
    <ligand>
        <name>substrate</name>
    </ligand>
</feature>
<feature type="binding site" evidence="1">
    <location>
        <position position="48"/>
    </location>
    <ligand>
        <name>substrate</name>
    </ligand>
</feature>
<feature type="binding site" evidence="1">
    <location>
        <position position="66"/>
    </location>
    <ligand>
        <name>substrate</name>
    </ligand>
</feature>
<feature type="binding site" evidence="1">
    <location>
        <position position="68"/>
    </location>
    <ligand>
        <name>substrate</name>
    </ligand>
</feature>
<feature type="binding site" evidence="1">
    <location>
        <position position="83"/>
    </location>
    <ligand>
        <name>substrate</name>
    </ligand>
</feature>
<comment type="function">
    <text evidence="1">Catalyzes the condensation of formaldehyde with tetrahydromethanopterin (H(4)MPT) to 5,10-methylenetetrahydromethanopterin.</text>
</comment>
<comment type="function">
    <text evidence="1">Catalyzes the reversible formation of ribulose-5-phosphate and formaldehyde from 3-hexulose-6-phosphate.</text>
</comment>
<comment type="catalytic activity">
    <reaction evidence="1">
        <text>5,6,7,8-tetrahydromethanopterin + formaldehyde = 5,10-methylenetetrahydromethanopterin + H2O</text>
        <dbReference type="Rhea" id="RHEA:24678"/>
        <dbReference type="ChEBI" id="CHEBI:15377"/>
        <dbReference type="ChEBI" id="CHEBI:16842"/>
        <dbReference type="ChEBI" id="CHEBI:57818"/>
        <dbReference type="ChEBI" id="CHEBI:58103"/>
        <dbReference type="EC" id="4.2.1.147"/>
    </reaction>
</comment>
<comment type="catalytic activity">
    <reaction evidence="1">
        <text>D-ribulose 5-phosphate + formaldehyde = D-arabino-hex-3-ulose 6-phosphate</text>
        <dbReference type="Rhea" id="RHEA:25201"/>
        <dbReference type="ChEBI" id="CHEBI:16842"/>
        <dbReference type="ChEBI" id="CHEBI:58121"/>
        <dbReference type="ChEBI" id="CHEBI:58542"/>
        <dbReference type="EC" id="4.1.2.43"/>
    </reaction>
</comment>
<comment type="pathway">
    <text evidence="1">Carbohydrate biosynthesis; D-ribose 5-phosphate biosynthesis.</text>
</comment>
<comment type="similarity">
    <text evidence="1">In the N-terminal section; belongs to the formaldehyde-activating enzyme family.</text>
</comment>
<comment type="similarity">
    <text evidence="1">In the C-terminal section; belongs to the HPS/KGPDC family. HPS subfamily.</text>
</comment>
<protein>
    <recommendedName>
        <fullName evidence="1">Bifunctional enzyme Fae/Hps</fullName>
    </recommendedName>
    <domain>
        <recommendedName>
            <fullName evidence="1">5,6,7,8-tetrahydromethanopterin hydro-lyase</fullName>
            <ecNumber evidence="1">4.2.1.147</ecNumber>
        </recommendedName>
        <alternativeName>
            <fullName evidence="1">Formaldehyde-activating enzyme</fullName>
            <shortName evidence="1">Fae</shortName>
        </alternativeName>
    </domain>
    <domain>
        <recommendedName>
            <fullName evidence="1">3-hexulose-6-phosphate synthase</fullName>
            <shortName evidence="1">HPS</shortName>
            <ecNumber evidence="1">4.1.2.43</ecNumber>
        </recommendedName>
        <alternativeName>
            <fullName evidence="1">D-arabino-3-hexulose-6-phosphate formaldehyde lyase</fullName>
        </alternativeName>
    </domain>
</protein>
<keyword id="KW-0119">Carbohydrate metabolism</keyword>
<keyword id="KW-0456">Lyase</keyword>
<keyword id="KW-0511">Multifunctional enzyme</keyword>